<dbReference type="EC" id="2.3.1.-" evidence="1"/>
<dbReference type="EMBL" id="BA000030">
    <property type="protein sequence ID" value="BAC73140.1"/>
    <property type="molecule type" value="Genomic_DNA"/>
</dbReference>
<dbReference type="RefSeq" id="WP_010986831.1">
    <property type="nucleotide sequence ID" value="NZ_JZJK01000066.1"/>
</dbReference>
<dbReference type="SMR" id="Q82CC3"/>
<dbReference type="GeneID" id="41542519"/>
<dbReference type="KEGG" id="sma:SAVERM_5428"/>
<dbReference type="eggNOG" id="COG4552">
    <property type="taxonomic scope" value="Bacteria"/>
</dbReference>
<dbReference type="HOGENOM" id="CLU_050659_0_0_11"/>
<dbReference type="OrthoDB" id="8399956at2"/>
<dbReference type="Proteomes" id="UP000000428">
    <property type="component" value="Chromosome"/>
</dbReference>
<dbReference type="GO" id="GO:0034069">
    <property type="term" value="F:aminoglycoside N-acetyltransferase activity"/>
    <property type="evidence" value="ECO:0007669"/>
    <property type="project" value="TreeGrafter"/>
</dbReference>
<dbReference type="GO" id="GO:0030649">
    <property type="term" value="P:aminoglycoside antibiotic catabolic process"/>
    <property type="evidence" value="ECO:0007669"/>
    <property type="project" value="TreeGrafter"/>
</dbReference>
<dbReference type="CDD" id="cd04301">
    <property type="entry name" value="NAT_SF"/>
    <property type="match status" value="1"/>
</dbReference>
<dbReference type="FunFam" id="3.30.1050.10:FF:000008">
    <property type="entry name" value="N-acetyltransferase Eis"/>
    <property type="match status" value="1"/>
</dbReference>
<dbReference type="Gene3D" id="3.40.630.30">
    <property type="match status" value="2"/>
</dbReference>
<dbReference type="Gene3D" id="3.30.1050.10">
    <property type="entry name" value="SCP2 sterol-binding domain"/>
    <property type="match status" value="1"/>
</dbReference>
<dbReference type="HAMAP" id="MF_01812">
    <property type="entry name" value="Eis"/>
    <property type="match status" value="1"/>
</dbReference>
<dbReference type="InterPro" id="IPR041380">
    <property type="entry name" value="Acetyltransf_17"/>
</dbReference>
<dbReference type="InterPro" id="IPR051554">
    <property type="entry name" value="Acetyltransferase_Eis"/>
</dbReference>
<dbReference type="InterPro" id="IPR016181">
    <property type="entry name" value="Acyl_CoA_acyltransferase"/>
</dbReference>
<dbReference type="InterPro" id="IPR025559">
    <property type="entry name" value="Eis_dom"/>
</dbReference>
<dbReference type="InterPro" id="IPR000182">
    <property type="entry name" value="GNAT_dom"/>
</dbReference>
<dbReference type="InterPro" id="IPR022902">
    <property type="entry name" value="NAcTrfase_Eis"/>
</dbReference>
<dbReference type="InterPro" id="IPR036527">
    <property type="entry name" value="SCP2_sterol-bd_dom_sf"/>
</dbReference>
<dbReference type="NCBIfam" id="NF002367">
    <property type="entry name" value="PRK01346.1-4"/>
    <property type="match status" value="1"/>
</dbReference>
<dbReference type="PANTHER" id="PTHR37817">
    <property type="entry name" value="N-ACETYLTRANSFERASE EIS"/>
    <property type="match status" value="1"/>
</dbReference>
<dbReference type="PANTHER" id="PTHR37817:SF1">
    <property type="entry name" value="N-ACETYLTRANSFERASE EIS"/>
    <property type="match status" value="1"/>
</dbReference>
<dbReference type="Pfam" id="PF17668">
    <property type="entry name" value="Acetyltransf_17"/>
    <property type="match status" value="1"/>
</dbReference>
<dbReference type="Pfam" id="PF13527">
    <property type="entry name" value="Acetyltransf_9"/>
    <property type="match status" value="1"/>
</dbReference>
<dbReference type="Pfam" id="PF13530">
    <property type="entry name" value="SCP2_2"/>
    <property type="match status" value="1"/>
</dbReference>
<dbReference type="SUPFAM" id="SSF55729">
    <property type="entry name" value="Acyl-CoA N-acyltransferases (Nat)"/>
    <property type="match status" value="1"/>
</dbReference>
<dbReference type="SUPFAM" id="SSF55718">
    <property type="entry name" value="SCP-like"/>
    <property type="match status" value="1"/>
</dbReference>
<dbReference type="PROSITE" id="PS51186">
    <property type="entry name" value="GNAT"/>
    <property type="match status" value="1"/>
</dbReference>
<sequence length="409" mass="44816">MTTDVRVLRQDDWNLWYDTLIRAFGGVAEASEERELWQTLTECDRSIGVWDGDACVGTAGAFSFRVTVPGGASVPAAGITMVSVAATHRRRGVLTAMMRRQLDDIRSWGEPLAVLTASEPAIYGRFGYGIGTHQLTADVDTSRVRLSVPPGTDDVRLRYAVPADVLDVCEAVYARLVPGRPGMPARRPGWDRLMVLDPESRRDGASPLQCVVAERDGETVGYTRFRVKPDWEPSGPKGTVVLQDLEALDPAAHAALWRFLFDIDLTSHLNARNRPLDEAWLHLVSDIRRCNLRKRDSLHVRLVDVGAALEARTYQAPVDVVFEVEDAFCPWNEGRWRLTGDGKGATCVRTRDSVDLALSVRDLGAAYLGGVSLVSLGAAGRVRELRPGALTEATSAFSSAIAPWLPHGF</sequence>
<keyword id="KW-0012">Acyltransferase</keyword>
<keyword id="KW-1185">Reference proteome</keyword>
<keyword id="KW-0808">Transferase</keyword>
<proteinExistence type="inferred from homology"/>
<organism>
    <name type="scientific">Streptomyces avermitilis (strain ATCC 31267 / DSM 46492 / JCM 5070 / NBRC 14893 / NCIMB 12804 / NRRL 8165 / MA-4680)</name>
    <dbReference type="NCBI Taxonomy" id="227882"/>
    <lineage>
        <taxon>Bacteria</taxon>
        <taxon>Bacillati</taxon>
        <taxon>Actinomycetota</taxon>
        <taxon>Actinomycetes</taxon>
        <taxon>Kitasatosporales</taxon>
        <taxon>Streptomycetaceae</taxon>
        <taxon>Streptomyces</taxon>
    </lineage>
</organism>
<evidence type="ECO:0000255" key="1">
    <source>
        <dbReference type="HAMAP-Rule" id="MF_01812"/>
    </source>
</evidence>
<accession>Q82CC3</accession>
<reference key="1">
    <citation type="journal article" date="2001" name="Proc. Natl. Acad. Sci. U.S.A.">
        <title>Genome sequence of an industrial microorganism Streptomyces avermitilis: deducing the ability of producing secondary metabolites.</title>
        <authorList>
            <person name="Omura S."/>
            <person name="Ikeda H."/>
            <person name="Ishikawa J."/>
            <person name="Hanamoto A."/>
            <person name="Takahashi C."/>
            <person name="Shinose M."/>
            <person name="Takahashi Y."/>
            <person name="Horikawa H."/>
            <person name="Nakazawa H."/>
            <person name="Osonoe T."/>
            <person name="Kikuchi H."/>
            <person name="Shiba T."/>
            <person name="Sakaki Y."/>
            <person name="Hattori M."/>
        </authorList>
    </citation>
    <scope>NUCLEOTIDE SEQUENCE [LARGE SCALE GENOMIC DNA]</scope>
    <source>
        <strain>ATCC 31267 / DSM 46492 / JCM 5070 / NBRC 14893 / NCIMB 12804 / NRRL 8165 / MA-4680</strain>
    </source>
</reference>
<reference key="2">
    <citation type="journal article" date="2003" name="Nat. Biotechnol.">
        <title>Complete genome sequence and comparative analysis of the industrial microorganism Streptomyces avermitilis.</title>
        <authorList>
            <person name="Ikeda H."/>
            <person name="Ishikawa J."/>
            <person name="Hanamoto A."/>
            <person name="Shinose M."/>
            <person name="Kikuchi H."/>
            <person name="Shiba T."/>
            <person name="Sakaki Y."/>
            <person name="Hattori M."/>
            <person name="Omura S."/>
        </authorList>
    </citation>
    <scope>NUCLEOTIDE SEQUENCE [LARGE SCALE GENOMIC DNA]</scope>
    <source>
        <strain>ATCC 31267 / DSM 46492 / JCM 5070 / NBRC 14893 / NCIMB 12804 / NRRL 8165 / MA-4680</strain>
    </source>
</reference>
<comment type="subunit">
    <text evidence="1">Homohexamer; trimer of dimers.</text>
</comment>
<comment type="similarity">
    <text>Belongs to the acetyltransferase Eis family.</text>
</comment>
<feature type="chain" id="PRO_0000220264" description="Uncharacterized N-acetyltransferase SAV_5428">
    <location>
        <begin position="1"/>
        <end position="409"/>
    </location>
</feature>
<feature type="domain" description="N-acetyltransferase" evidence="1">
    <location>
        <begin position="3"/>
        <end position="162"/>
    </location>
</feature>
<feature type="active site" description="Proton donor" evidence="1">
    <location>
        <position position="123"/>
    </location>
</feature>
<feature type="active site" description="Proton acceptor; via carboxylate" evidence="1">
    <location>
        <position position="409"/>
    </location>
</feature>
<feature type="binding site" evidence="1">
    <location>
        <begin position="82"/>
        <end position="84"/>
    </location>
    <ligand>
        <name>acetyl-CoA</name>
        <dbReference type="ChEBI" id="CHEBI:57288"/>
    </ligand>
</feature>
<feature type="binding site" evidence="1">
    <location>
        <begin position="90"/>
        <end position="95"/>
    </location>
    <ligand>
        <name>acetyl-CoA</name>
        <dbReference type="ChEBI" id="CHEBI:57288"/>
    </ligand>
</feature>
<feature type="binding site" evidence="1">
    <location>
        <begin position="118"/>
        <end position="119"/>
    </location>
    <ligand>
        <name>acetyl-CoA</name>
        <dbReference type="ChEBI" id="CHEBI:57288"/>
    </ligand>
</feature>
<name>Y5428_STRAW</name>
<gene>
    <name type="ordered locus">SAV_5428</name>
</gene>
<protein>
    <recommendedName>
        <fullName evidence="1">Uncharacterized N-acetyltransferase SAV_5428</fullName>
        <ecNumber evidence="1">2.3.1.-</ecNumber>
    </recommendedName>
</protein>